<comment type="function">
    <text evidence="1">Catalyzes the reversible isomerization-deamination of glucosamine 6-phosphate (GlcN6P) to form fructose 6-phosphate (Fru6P) and ammonium ion.</text>
</comment>
<comment type="catalytic activity">
    <reaction evidence="1">
        <text>alpha-D-glucosamine 6-phosphate + H2O = beta-D-fructose 6-phosphate + NH4(+)</text>
        <dbReference type="Rhea" id="RHEA:12172"/>
        <dbReference type="ChEBI" id="CHEBI:15377"/>
        <dbReference type="ChEBI" id="CHEBI:28938"/>
        <dbReference type="ChEBI" id="CHEBI:57634"/>
        <dbReference type="ChEBI" id="CHEBI:75989"/>
        <dbReference type="EC" id="3.5.99.6"/>
    </reaction>
</comment>
<comment type="activity regulation">
    <text evidence="1">Allosterically activated by N-acetylglucosamine 6-phosphate (GlcNAc6P).</text>
</comment>
<comment type="pathway">
    <text evidence="1">Amino-sugar metabolism; N-acetylneuraminate degradation; D-fructose 6-phosphate from N-acetylneuraminate: step 5/5.</text>
</comment>
<comment type="similarity">
    <text evidence="1">Belongs to the glucosamine/galactosamine-6-phosphate isomerase family. NagB subfamily.</text>
</comment>
<protein>
    <recommendedName>
        <fullName evidence="1">Glucosamine-6-phosphate deaminase</fullName>
        <ecNumber evidence="1">3.5.99.6</ecNumber>
    </recommendedName>
    <alternativeName>
        <fullName evidence="1">GlcN6P deaminase</fullName>
        <shortName evidence="1">GNPDA</shortName>
    </alternativeName>
    <alternativeName>
        <fullName evidence="1">Glucosamine-6-phosphate isomerase</fullName>
    </alternativeName>
</protein>
<sequence>MRLIIRTNYNDISKWAANHVAMRIKEFSPTKEKPFILGLPTGSSPIGMYKNLIEMNKIGKISFENVVTFNMDEYVGLDKNHPESYNSFMWNNFFSHIDIKKENVHMLNGNAINLTNECTEYENKIKSYGGIMLFVGGIGPDGHIAFNEPGSSLKSRTRLKTLTQDTIIANSRFFENDINKVPKSALTVGVGTIMDSKEVMIIVNGHNKARALRHAIEKGVNHMWTISTLQLHKNAIIVSDEAATYELKVGTVKYFNDIEKDNFNNDI</sequence>
<accession>B2RZL5</accession>
<dbReference type="EC" id="3.5.99.6" evidence="1"/>
<dbReference type="EMBL" id="CP000048">
    <property type="protein sequence ID" value="AAX16671.1"/>
    <property type="molecule type" value="Genomic_DNA"/>
</dbReference>
<dbReference type="RefSeq" id="WP_012421928.1">
    <property type="nucleotide sequence ID" value="NZ_CP073136.1"/>
</dbReference>
<dbReference type="SMR" id="B2RZL5"/>
<dbReference type="GeneID" id="71842961"/>
<dbReference type="KEGG" id="bhr:BH0152"/>
<dbReference type="HOGENOM" id="CLU_049611_0_1_12"/>
<dbReference type="UniPathway" id="UPA00629">
    <property type="reaction ID" value="UER00684"/>
</dbReference>
<dbReference type="Proteomes" id="UP000008834">
    <property type="component" value="Chromosome"/>
</dbReference>
<dbReference type="GO" id="GO:0005737">
    <property type="term" value="C:cytoplasm"/>
    <property type="evidence" value="ECO:0007669"/>
    <property type="project" value="TreeGrafter"/>
</dbReference>
<dbReference type="GO" id="GO:0004342">
    <property type="term" value="F:glucosamine-6-phosphate deaminase activity"/>
    <property type="evidence" value="ECO:0007669"/>
    <property type="project" value="UniProtKB-UniRule"/>
</dbReference>
<dbReference type="GO" id="GO:0042802">
    <property type="term" value="F:identical protein binding"/>
    <property type="evidence" value="ECO:0007669"/>
    <property type="project" value="TreeGrafter"/>
</dbReference>
<dbReference type="GO" id="GO:0005975">
    <property type="term" value="P:carbohydrate metabolic process"/>
    <property type="evidence" value="ECO:0007669"/>
    <property type="project" value="InterPro"/>
</dbReference>
<dbReference type="GO" id="GO:0006043">
    <property type="term" value="P:glucosamine catabolic process"/>
    <property type="evidence" value="ECO:0007669"/>
    <property type="project" value="TreeGrafter"/>
</dbReference>
<dbReference type="GO" id="GO:0006046">
    <property type="term" value="P:N-acetylglucosamine catabolic process"/>
    <property type="evidence" value="ECO:0007669"/>
    <property type="project" value="TreeGrafter"/>
</dbReference>
<dbReference type="GO" id="GO:0019262">
    <property type="term" value="P:N-acetylneuraminate catabolic process"/>
    <property type="evidence" value="ECO:0007669"/>
    <property type="project" value="UniProtKB-UniRule"/>
</dbReference>
<dbReference type="CDD" id="cd01399">
    <property type="entry name" value="GlcN6P_deaminase"/>
    <property type="match status" value="1"/>
</dbReference>
<dbReference type="FunFam" id="3.40.50.1360:FF:000002">
    <property type="entry name" value="Glucosamine-6-phosphate deaminase"/>
    <property type="match status" value="1"/>
</dbReference>
<dbReference type="Gene3D" id="3.40.50.1360">
    <property type="match status" value="1"/>
</dbReference>
<dbReference type="HAMAP" id="MF_01241">
    <property type="entry name" value="GlcN6P_deamin"/>
    <property type="match status" value="1"/>
</dbReference>
<dbReference type="InterPro" id="IPR006148">
    <property type="entry name" value="Glc/Gal-6P_isomerase"/>
</dbReference>
<dbReference type="InterPro" id="IPR004547">
    <property type="entry name" value="Glucosamine6P_isomerase"/>
</dbReference>
<dbReference type="InterPro" id="IPR018321">
    <property type="entry name" value="Glucosamine6P_isomerase_CS"/>
</dbReference>
<dbReference type="InterPro" id="IPR037171">
    <property type="entry name" value="NagB/RpiA_transferase-like"/>
</dbReference>
<dbReference type="NCBIfam" id="TIGR00502">
    <property type="entry name" value="nagB"/>
    <property type="match status" value="1"/>
</dbReference>
<dbReference type="PANTHER" id="PTHR11280">
    <property type="entry name" value="GLUCOSAMINE-6-PHOSPHATE ISOMERASE"/>
    <property type="match status" value="1"/>
</dbReference>
<dbReference type="PANTHER" id="PTHR11280:SF5">
    <property type="entry name" value="GLUCOSAMINE-6-PHOSPHATE ISOMERASE"/>
    <property type="match status" value="1"/>
</dbReference>
<dbReference type="Pfam" id="PF01182">
    <property type="entry name" value="Glucosamine_iso"/>
    <property type="match status" value="1"/>
</dbReference>
<dbReference type="SUPFAM" id="SSF100950">
    <property type="entry name" value="NagB/RpiA/CoA transferase-like"/>
    <property type="match status" value="1"/>
</dbReference>
<dbReference type="PROSITE" id="PS01161">
    <property type="entry name" value="GLC_GALNAC_ISOMERASE"/>
    <property type="match status" value="1"/>
</dbReference>
<feature type="chain" id="PRO_1000139761" description="Glucosamine-6-phosphate deaminase">
    <location>
        <begin position="1"/>
        <end position="267"/>
    </location>
</feature>
<feature type="active site" description="Proton acceptor; for enolization step" evidence="1">
    <location>
        <position position="72"/>
    </location>
</feature>
<feature type="active site" description="For ring-opening step" evidence="1">
    <location>
        <position position="141"/>
    </location>
</feature>
<feature type="active site" description="Proton acceptor; for ring-opening step" evidence="1">
    <location>
        <position position="143"/>
    </location>
</feature>
<feature type="active site" description="For ring-opening step" evidence="1">
    <location>
        <position position="148"/>
    </location>
</feature>
<feature type="site" description="Part of the allosteric site" evidence="1">
    <location>
        <position position="151"/>
    </location>
</feature>
<feature type="site" description="Part of the allosteric site" evidence="1">
    <location>
        <position position="158"/>
    </location>
</feature>
<feature type="site" description="Part of the allosteric site" evidence="1">
    <location>
        <position position="160"/>
    </location>
</feature>
<feature type="site" description="Part of the allosteric site" evidence="1">
    <location>
        <position position="161"/>
    </location>
</feature>
<feature type="site" description="Part of the allosteric site" evidence="1">
    <location>
        <position position="254"/>
    </location>
</feature>
<name>NAGB_BORHD</name>
<organism>
    <name type="scientific">Borrelia hermsii (strain HS1 / DAH)</name>
    <dbReference type="NCBI Taxonomy" id="314723"/>
    <lineage>
        <taxon>Bacteria</taxon>
        <taxon>Pseudomonadati</taxon>
        <taxon>Spirochaetota</taxon>
        <taxon>Spirochaetia</taxon>
        <taxon>Spirochaetales</taxon>
        <taxon>Borreliaceae</taxon>
        <taxon>Borrelia</taxon>
    </lineage>
</organism>
<proteinExistence type="inferred from homology"/>
<gene>
    <name evidence="1" type="primary">nagB</name>
    <name type="ordered locus">BH0152</name>
</gene>
<keyword id="KW-0021">Allosteric enzyme</keyword>
<keyword id="KW-0119">Carbohydrate metabolism</keyword>
<keyword id="KW-0378">Hydrolase</keyword>
<evidence type="ECO:0000255" key="1">
    <source>
        <dbReference type="HAMAP-Rule" id="MF_01241"/>
    </source>
</evidence>
<reference key="1">
    <citation type="submission" date="2004-12" db="EMBL/GenBank/DDBJ databases">
        <title>The genome sequence of Borrelia hermsii and Borrelia turicatae: comparative analysis of two agents of endemic N. America relapsing fever.</title>
        <authorList>
            <person name="Porcella S.F."/>
            <person name="Raffel S.J."/>
            <person name="Schrumpf M.E."/>
            <person name="Montgomery B."/>
            <person name="Smith T."/>
            <person name="Schwan T.G."/>
        </authorList>
    </citation>
    <scope>NUCLEOTIDE SEQUENCE [LARGE SCALE GENOMIC DNA]</scope>
    <source>
        <strain>HS1 / DAH</strain>
    </source>
</reference>